<keyword id="KW-0456">Lyase</keyword>
<keyword id="KW-1185">Reference proteome</keyword>
<name>Y1875_BORPE</name>
<feature type="chain" id="PRO_0000217164" description="Putative hydro-lyase BP1875">
    <location>
        <begin position="1"/>
        <end position="277"/>
    </location>
</feature>
<dbReference type="EC" id="4.2.1.-" evidence="1"/>
<dbReference type="EMBL" id="BX640416">
    <property type="protein sequence ID" value="CAE42158.1"/>
    <property type="status" value="ALT_INIT"/>
    <property type="molecule type" value="Genomic_DNA"/>
</dbReference>
<dbReference type="RefSeq" id="NP_880567.1">
    <property type="nucleotide sequence ID" value="NC_002929.2"/>
</dbReference>
<dbReference type="SMR" id="Q7VXB5"/>
<dbReference type="STRING" id="257313.BP1875"/>
<dbReference type="PaxDb" id="257313-BP1875"/>
<dbReference type="KEGG" id="bpe:BP1875"/>
<dbReference type="PATRIC" id="fig|257313.5.peg.2014"/>
<dbReference type="eggNOG" id="COG4336">
    <property type="taxonomic scope" value="Bacteria"/>
</dbReference>
<dbReference type="HOGENOM" id="CLU_059759_0_0_4"/>
<dbReference type="Proteomes" id="UP000002676">
    <property type="component" value="Chromosome"/>
</dbReference>
<dbReference type="GO" id="GO:0016829">
    <property type="term" value="F:lyase activity"/>
    <property type="evidence" value="ECO:0007669"/>
    <property type="project" value="UniProtKB-KW"/>
</dbReference>
<dbReference type="FunFam" id="3.30.2040.10:FF:000001">
    <property type="entry name" value="D-glutamate cyclase, mitochondrial"/>
    <property type="match status" value="1"/>
</dbReference>
<dbReference type="Gene3D" id="3.40.1640.10">
    <property type="entry name" value="PSTPO5379-like"/>
    <property type="match status" value="1"/>
</dbReference>
<dbReference type="Gene3D" id="3.30.2040.10">
    <property type="entry name" value="PSTPO5379-like domain"/>
    <property type="match status" value="1"/>
</dbReference>
<dbReference type="HAMAP" id="MF_01830">
    <property type="entry name" value="Hydro_lyase"/>
    <property type="match status" value="1"/>
</dbReference>
<dbReference type="InterPro" id="IPR009906">
    <property type="entry name" value="D-Glu_cyclase"/>
</dbReference>
<dbReference type="InterPro" id="IPR038021">
    <property type="entry name" value="Putative_hydro-lyase"/>
</dbReference>
<dbReference type="InterPro" id="IPR016938">
    <property type="entry name" value="UPF0317"/>
</dbReference>
<dbReference type="NCBIfam" id="NF003969">
    <property type="entry name" value="PRK05463.1"/>
    <property type="match status" value="1"/>
</dbReference>
<dbReference type="PANTHER" id="PTHR32022">
    <property type="entry name" value="D-GLUTAMATE CYCLASE, MITOCHONDRIAL"/>
    <property type="match status" value="1"/>
</dbReference>
<dbReference type="PANTHER" id="PTHR32022:SF10">
    <property type="entry name" value="D-GLUTAMATE CYCLASE, MITOCHONDRIAL"/>
    <property type="match status" value="1"/>
</dbReference>
<dbReference type="Pfam" id="PF07286">
    <property type="entry name" value="D-Glu_cyclase"/>
    <property type="match status" value="1"/>
</dbReference>
<dbReference type="PIRSF" id="PIRSF029755">
    <property type="entry name" value="UCP029755"/>
    <property type="match status" value="1"/>
</dbReference>
<dbReference type="SUPFAM" id="SSF160920">
    <property type="entry name" value="PSTPO5379-like"/>
    <property type="match status" value="1"/>
</dbReference>
<proteinExistence type="inferred from homology"/>
<organism>
    <name type="scientific">Bordetella pertussis (strain Tohama I / ATCC BAA-589 / NCTC 13251)</name>
    <dbReference type="NCBI Taxonomy" id="257313"/>
    <lineage>
        <taxon>Bacteria</taxon>
        <taxon>Pseudomonadati</taxon>
        <taxon>Pseudomonadota</taxon>
        <taxon>Betaproteobacteria</taxon>
        <taxon>Burkholderiales</taxon>
        <taxon>Alcaligenaceae</taxon>
        <taxon>Bordetella</taxon>
    </lineage>
</organism>
<sequence>MRRPAPYHRVAAIMTILSLAGAGHQARLDARGGMLTGPTANLAPGHVQANLAILPQAVAGDFLRFCQRNPKPCPLLAVSEPGDPSLPELGLDIDIRTDVPRYRVWRDGKLVDEPLDVRGLWRDDLVAFLIGCSFSFEEAMLENGLPVRHIEQGCNVPMYRTNIATHPAGPFSGPLVVSMRPLKAADAIRAIQVTSRFPSVHGAPVHLGDPALIGIADLGRPDYGDAVEIRAGEIPVFWACGVTPQSVVAAVRPEFCITHAPGHMLVTDLLNSRLAAF</sequence>
<accession>Q7VXB5</accession>
<evidence type="ECO:0000255" key="1">
    <source>
        <dbReference type="HAMAP-Rule" id="MF_01830"/>
    </source>
</evidence>
<evidence type="ECO:0000305" key="2"/>
<reference key="1">
    <citation type="journal article" date="2003" name="Nat. Genet.">
        <title>Comparative analysis of the genome sequences of Bordetella pertussis, Bordetella parapertussis and Bordetella bronchiseptica.</title>
        <authorList>
            <person name="Parkhill J."/>
            <person name="Sebaihia M."/>
            <person name="Preston A."/>
            <person name="Murphy L.D."/>
            <person name="Thomson N.R."/>
            <person name="Harris D.E."/>
            <person name="Holden M.T.G."/>
            <person name="Churcher C.M."/>
            <person name="Bentley S.D."/>
            <person name="Mungall K.L."/>
            <person name="Cerdeno-Tarraga A.-M."/>
            <person name="Temple L."/>
            <person name="James K.D."/>
            <person name="Harris B."/>
            <person name="Quail M.A."/>
            <person name="Achtman M."/>
            <person name="Atkin R."/>
            <person name="Baker S."/>
            <person name="Basham D."/>
            <person name="Bason N."/>
            <person name="Cherevach I."/>
            <person name="Chillingworth T."/>
            <person name="Collins M."/>
            <person name="Cronin A."/>
            <person name="Davis P."/>
            <person name="Doggett J."/>
            <person name="Feltwell T."/>
            <person name="Goble A."/>
            <person name="Hamlin N."/>
            <person name="Hauser H."/>
            <person name="Holroyd S."/>
            <person name="Jagels K."/>
            <person name="Leather S."/>
            <person name="Moule S."/>
            <person name="Norberczak H."/>
            <person name="O'Neil S."/>
            <person name="Ormond D."/>
            <person name="Price C."/>
            <person name="Rabbinowitsch E."/>
            <person name="Rutter S."/>
            <person name="Sanders M."/>
            <person name="Saunders D."/>
            <person name="Seeger K."/>
            <person name="Sharp S."/>
            <person name="Simmonds M."/>
            <person name="Skelton J."/>
            <person name="Squares R."/>
            <person name="Squares S."/>
            <person name="Stevens K."/>
            <person name="Unwin L."/>
            <person name="Whitehead S."/>
            <person name="Barrell B.G."/>
            <person name="Maskell D.J."/>
        </authorList>
    </citation>
    <scope>NUCLEOTIDE SEQUENCE [LARGE SCALE GENOMIC DNA]</scope>
    <source>
        <strain>Tohama I / ATCC BAA-589 / NCTC 13251</strain>
    </source>
</reference>
<protein>
    <recommendedName>
        <fullName evidence="1">Putative hydro-lyase BP1875</fullName>
        <ecNumber evidence="1">4.2.1.-</ecNumber>
    </recommendedName>
</protein>
<gene>
    <name type="ordered locus">BP1875</name>
</gene>
<comment type="similarity">
    <text evidence="1">Belongs to the D-glutamate cyclase family.</text>
</comment>
<comment type="sequence caution" evidence="2">
    <conflict type="erroneous initiation">
        <sequence resource="EMBL-CDS" id="CAE42158"/>
    </conflict>
</comment>